<proteinExistence type="inferred from homology"/>
<keyword id="KW-0256">Endoplasmic reticulum</keyword>
<keyword id="KW-1185">Reference proteome</keyword>
<keyword id="KW-0732">Signal</keyword>
<feature type="signal peptide" evidence="1">
    <location>
        <begin position="1"/>
        <end position="20"/>
    </location>
</feature>
<feature type="chain" id="PRO_0000304033" description="Uncharacterized protein C685.03">
    <location>
        <begin position="21"/>
        <end position="452"/>
    </location>
</feature>
<feature type="region of interest" description="Disordered" evidence="2">
    <location>
        <begin position="130"/>
        <end position="151"/>
    </location>
</feature>
<reference key="1">
    <citation type="journal article" date="2002" name="Nature">
        <title>The genome sequence of Schizosaccharomyces pombe.</title>
        <authorList>
            <person name="Wood V."/>
            <person name="Gwilliam R."/>
            <person name="Rajandream M.A."/>
            <person name="Lyne M.H."/>
            <person name="Lyne R."/>
            <person name="Stewart A."/>
            <person name="Sgouros J.G."/>
            <person name="Peat N."/>
            <person name="Hayles J."/>
            <person name="Baker S.G."/>
            <person name="Basham D."/>
            <person name="Bowman S."/>
            <person name="Brooks K."/>
            <person name="Brown D."/>
            <person name="Brown S."/>
            <person name="Chillingworth T."/>
            <person name="Churcher C.M."/>
            <person name="Collins M."/>
            <person name="Connor R."/>
            <person name="Cronin A."/>
            <person name="Davis P."/>
            <person name="Feltwell T."/>
            <person name="Fraser A."/>
            <person name="Gentles S."/>
            <person name="Goble A."/>
            <person name="Hamlin N."/>
            <person name="Harris D.E."/>
            <person name="Hidalgo J."/>
            <person name="Hodgson G."/>
            <person name="Holroyd S."/>
            <person name="Hornsby T."/>
            <person name="Howarth S."/>
            <person name="Huckle E.J."/>
            <person name="Hunt S."/>
            <person name="Jagels K."/>
            <person name="James K.D."/>
            <person name="Jones L."/>
            <person name="Jones M."/>
            <person name="Leather S."/>
            <person name="McDonald S."/>
            <person name="McLean J."/>
            <person name="Mooney P."/>
            <person name="Moule S."/>
            <person name="Mungall K.L."/>
            <person name="Murphy L.D."/>
            <person name="Niblett D."/>
            <person name="Odell C."/>
            <person name="Oliver K."/>
            <person name="O'Neil S."/>
            <person name="Pearson D."/>
            <person name="Quail M.A."/>
            <person name="Rabbinowitsch E."/>
            <person name="Rutherford K.M."/>
            <person name="Rutter S."/>
            <person name="Saunders D."/>
            <person name="Seeger K."/>
            <person name="Sharp S."/>
            <person name="Skelton J."/>
            <person name="Simmonds M.N."/>
            <person name="Squares R."/>
            <person name="Squares S."/>
            <person name="Stevens K."/>
            <person name="Taylor K."/>
            <person name="Taylor R.G."/>
            <person name="Tivey A."/>
            <person name="Walsh S.V."/>
            <person name="Warren T."/>
            <person name="Whitehead S."/>
            <person name="Woodward J.R."/>
            <person name="Volckaert G."/>
            <person name="Aert R."/>
            <person name="Robben J."/>
            <person name="Grymonprez B."/>
            <person name="Weltjens I."/>
            <person name="Vanstreels E."/>
            <person name="Rieger M."/>
            <person name="Schaefer M."/>
            <person name="Mueller-Auer S."/>
            <person name="Gabel C."/>
            <person name="Fuchs M."/>
            <person name="Duesterhoeft A."/>
            <person name="Fritzc C."/>
            <person name="Holzer E."/>
            <person name="Moestl D."/>
            <person name="Hilbert H."/>
            <person name="Borzym K."/>
            <person name="Langer I."/>
            <person name="Beck A."/>
            <person name="Lehrach H."/>
            <person name="Reinhardt R."/>
            <person name="Pohl T.M."/>
            <person name="Eger P."/>
            <person name="Zimmermann W."/>
            <person name="Wedler H."/>
            <person name="Wambutt R."/>
            <person name="Purnelle B."/>
            <person name="Goffeau A."/>
            <person name="Cadieu E."/>
            <person name="Dreano S."/>
            <person name="Gloux S."/>
            <person name="Lelaure V."/>
            <person name="Mottier S."/>
            <person name="Galibert F."/>
            <person name="Aves S.J."/>
            <person name="Xiang Z."/>
            <person name="Hunt C."/>
            <person name="Moore K."/>
            <person name="Hurst S.M."/>
            <person name="Lucas M."/>
            <person name="Rochet M."/>
            <person name="Gaillardin C."/>
            <person name="Tallada V.A."/>
            <person name="Garzon A."/>
            <person name="Thode G."/>
            <person name="Daga R.R."/>
            <person name="Cruzado L."/>
            <person name="Jimenez J."/>
            <person name="Sanchez M."/>
            <person name="del Rey F."/>
            <person name="Benito J."/>
            <person name="Dominguez A."/>
            <person name="Revuelta J.L."/>
            <person name="Moreno S."/>
            <person name="Armstrong J."/>
            <person name="Forsburg S.L."/>
            <person name="Cerutti L."/>
            <person name="Lowe T."/>
            <person name="McCombie W.R."/>
            <person name="Paulsen I."/>
            <person name="Potashkin J."/>
            <person name="Shpakovski G.V."/>
            <person name="Ussery D."/>
            <person name="Barrell B.G."/>
            <person name="Nurse P."/>
        </authorList>
    </citation>
    <scope>NUCLEOTIDE SEQUENCE [LARGE SCALE GENOMIC DNA]</scope>
    <source>
        <strain>972 / ATCC 24843</strain>
    </source>
</reference>
<reference key="2">
    <citation type="journal article" date="2006" name="Nat. Biotechnol.">
        <title>ORFeome cloning and global analysis of protein localization in the fission yeast Schizosaccharomyces pombe.</title>
        <authorList>
            <person name="Matsuyama A."/>
            <person name="Arai R."/>
            <person name="Yashiroda Y."/>
            <person name="Shirai A."/>
            <person name="Kamata A."/>
            <person name="Sekido S."/>
            <person name="Kobayashi Y."/>
            <person name="Hashimoto A."/>
            <person name="Hamamoto M."/>
            <person name="Hiraoka Y."/>
            <person name="Horinouchi S."/>
            <person name="Yoshida M."/>
        </authorList>
    </citation>
    <scope>SUBCELLULAR LOCATION [LARGE SCALE ANALYSIS]</scope>
</reference>
<comment type="subcellular location">
    <subcellularLocation>
        <location evidence="3">Endoplasmic reticulum</location>
    </subcellularLocation>
</comment>
<organism>
    <name type="scientific">Schizosaccharomyces pombe (strain 972 / ATCC 24843)</name>
    <name type="common">Fission yeast</name>
    <dbReference type="NCBI Taxonomy" id="284812"/>
    <lineage>
        <taxon>Eukaryota</taxon>
        <taxon>Fungi</taxon>
        <taxon>Dikarya</taxon>
        <taxon>Ascomycota</taxon>
        <taxon>Taphrinomycotina</taxon>
        <taxon>Schizosaccharomycetes</taxon>
        <taxon>Schizosaccharomycetales</taxon>
        <taxon>Schizosaccharomycetaceae</taxon>
        <taxon>Schizosaccharomyces</taxon>
    </lineage>
</organism>
<protein>
    <recommendedName>
        <fullName>Uncharacterized protein C685.03</fullName>
    </recommendedName>
</protein>
<evidence type="ECO:0000255" key="1"/>
<evidence type="ECO:0000256" key="2">
    <source>
        <dbReference type="SAM" id="MobiDB-lite"/>
    </source>
</evidence>
<evidence type="ECO:0000269" key="3">
    <source>
    </source>
</evidence>
<gene>
    <name type="ORF">SPBC685.03</name>
</gene>
<sequence>MQFFGSLFVSLLGAAGLANALPSPGIPSNDKDLAIYPPVDANNTTSQDVVIDVVLFNGTEWISSRERFSLVSPGWASIYGPSGQSSVGSVLYSPILDYIDNAQLLVLDDVSFGVFSSLANSVTGYASNYTQSSSNSTSTMNSTGSVSGGSVYPTNSTTNSSISWNSSTSAATNTSSSSSSSSQSSVVSVNSEIFSYFGLSQQYVNYSTSRLCVVGTPRANMSTVSVTNNGSAVSNYTVNTNGWTSSNFKCVDDVVANIFGLDFYTAAVLSEVSILRSFALCNATTSSSLFRQIASYGVYGSFHFSSSESGSFANLIGTNNYFMTDVKSSSVVIVQSETSCSINSASMSSNTTYFYWNSTSSLSSSVFTNTTSSSNSTNSSIPTTYPSNSTTYQNITTSYPWSQPVVNITDYLSDNGDGHFVLAGDGNQTIGDFYVMNWTTIASGEYLVPFNY</sequence>
<name>YGJ3_SCHPO</name>
<dbReference type="EMBL" id="CU329671">
    <property type="protein sequence ID" value="CAB39360.1"/>
    <property type="molecule type" value="Genomic_DNA"/>
</dbReference>
<dbReference type="PIR" id="T40634">
    <property type="entry name" value="T40634"/>
</dbReference>
<dbReference type="RefSeq" id="NP_596137.1">
    <property type="nucleotide sequence ID" value="NM_001022055.2"/>
</dbReference>
<dbReference type="PaxDb" id="4896-SPBC685.03.1"/>
<dbReference type="EnsemblFungi" id="SPBC685.03.1">
    <property type="protein sequence ID" value="SPBC685.03.1:pep"/>
    <property type="gene ID" value="SPBC685.03"/>
</dbReference>
<dbReference type="KEGG" id="spo:2541090"/>
<dbReference type="PomBase" id="SPBC685.03"/>
<dbReference type="VEuPathDB" id="FungiDB:SPBC685.03"/>
<dbReference type="HOGENOM" id="CLU_598730_0_0_1"/>
<dbReference type="InParanoid" id="Q9Y7L5"/>
<dbReference type="OMA" id="STRERFW"/>
<dbReference type="PRO" id="PR:Q9Y7L5"/>
<dbReference type="Proteomes" id="UP000002485">
    <property type="component" value="Chromosome II"/>
</dbReference>
<dbReference type="GO" id="GO:0005783">
    <property type="term" value="C:endoplasmic reticulum"/>
    <property type="evidence" value="ECO:0007005"/>
    <property type="project" value="PomBase"/>
</dbReference>
<accession>Q9Y7L5</accession>